<evidence type="ECO:0000255" key="1">
    <source>
        <dbReference type="HAMAP-Rule" id="MF_00443"/>
    </source>
</evidence>
<evidence type="ECO:0000256" key="2">
    <source>
        <dbReference type="SAM" id="MobiDB-lite"/>
    </source>
</evidence>
<reference key="1">
    <citation type="submission" date="2005-07" db="EMBL/GenBank/DDBJ databases">
        <title>Complete sequence of Synechococcus sp. CC9605.</title>
        <authorList>
            <consortium name="US DOE Joint Genome Institute"/>
            <person name="Copeland A."/>
            <person name="Lucas S."/>
            <person name="Lapidus A."/>
            <person name="Barry K."/>
            <person name="Detter J.C."/>
            <person name="Glavina T."/>
            <person name="Hammon N."/>
            <person name="Israni S."/>
            <person name="Pitluck S."/>
            <person name="Schmutz J."/>
            <person name="Martinez M."/>
            <person name="Larimer F."/>
            <person name="Land M."/>
            <person name="Kyrpides N."/>
            <person name="Ivanova N."/>
            <person name="Richardson P."/>
        </authorList>
    </citation>
    <scope>NUCLEOTIDE SEQUENCE [LARGE SCALE GENOMIC DNA]</scope>
    <source>
        <strain>CC9605</strain>
    </source>
</reference>
<feature type="chain" id="PRO_0000236369" description="Thiazole synthase">
    <location>
        <begin position="1"/>
        <end position="272"/>
    </location>
</feature>
<feature type="region of interest" description="Disordered" evidence="2">
    <location>
        <begin position="249"/>
        <end position="272"/>
    </location>
</feature>
<feature type="compositionally biased region" description="Polar residues" evidence="2">
    <location>
        <begin position="258"/>
        <end position="272"/>
    </location>
</feature>
<feature type="active site" description="Schiff-base intermediate with DXP" evidence="1">
    <location>
        <position position="111"/>
    </location>
</feature>
<feature type="binding site" evidence="1">
    <location>
        <position position="172"/>
    </location>
    <ligand>
        <name>1-deoxy-D-xylulose 5-phosphate</name>
        <dbReference type="ChEBI" id="CHEBI:57792"/>
    </ligand>
</feature>
<feature type="binding site" evidence="1">
    <location>
        <begin position="198"/>
        <end position="199"/>
    </location>
    <ligand>
        <name>1-deoxy-D-xylulose 5-phosphate</name>
        <dbReference type="ChEBI" id="CHEBI:57792"/>
    </ligand>
</feature>
<feature type="binding site" evidence="1">
    <location>
        <begin position="220"/>
        <end position="221"/>
    </location>
    <ligand>
        <name>1-deoxy-D-xylulose 5-phosphate</name>
        <dbReference type="ChEBI" id="CHEBI:57792"/>
    </ligand>
</feature>
<proteinExistence type="inferred from homology"/>
<dbReference type="EC" id="2.8.1.10" evidence="1"/>
<dbReference type="EMBL" id="CP000110">
    <property type="protein sequence ID" value="ABB33833.1"/>
    <property type="molecule type" value="Genomic_DNA"/>
</dbReference>
<dbReference type="RefSeq" id="WP_011363095.1">
    <property type="nucleotide sequence ID" value="NC_007516.1"/>
</dbReference>
<dbReference type="SMR" id="Q3ANJ9"/>
<dbReference type="STRING" id="110662.Syncc9605_0054"/>
<dbReference type="KEGG" id="syd:Syncc9605_0054"/>
<dbReference type="eggNOG" id="COG2022">
    <property type="taxonomic scope" value="Bacteria"/>
</dbReference>
<dbReference type="HOGENOM" id="CLU_062233_1_0_3"/>
<dbReference type="OrthoDB" id="9805935at2"/>
<dbReference type="UniPathway" id="UPA00060"/>
<dbReference type="GO" id="GO:0005737">
    <property type="term" value="C:cytoplasm"/>
    <property type="evidence" value="ECO:0007669"/>
    <property type="project" value="UniProtKB-SubCell"/>
</dbReference>
<dbReference type="GO" id="GO:1990107">
    <property type="term" value="F:thiazole synthase activity"/>
    <property type="evidence" value="ECO:0007669"/>
    <property type="project" value="UniProtKB-EC"/>
</dbReference>
<dbReference type="GO" id="GO:0009229">
    <property type="term" value="P:thiamine diphosphate biosynthetic process"/>
    <property type="evidence" value="ECO:0007669"/>
    <property type="project" value="UniProtKB-UniRule"/>
</dbReference>
<dbReference type="CDD" id="cd04728">
    <property type="entry name" value="ThiG"/>
    <property type="match status" value="1"/>
</dbReference>
<dbReference type="Gene3D" id="3.20.20.70">
    <property type="entry name" value="Aldolase class I"/>
    <property type="match status" value="1"/>
</dbReference>
<dbReference type="HAMAP" id="MF_00443">
    <property type="entry name" value="ThiG"/>
    <property type="match status" value="1"/>
</dbReference>
<dbReference type="InterPro" id="IPR013785">
    <property type="entry name" value="Aldolase_TIM"/>
</dbReference>
<dbReference type="InterPro" id="IPR033983">
    <property type="entry name" value="Thiazole_synthase_ThiG"/>
</dbReference>
<dbReference type="InterPro" id="IPR008867">
    <property type="entry name" value="ThiG"/>
</dbReference>
<dbReference type="PANTHER" id="PTHR34266">
    <property type="entry name" value="THIAZOLE SYNTHASE"/>
    <property type="match status" value="1"/>
</dbReference>
<dbReference type="PANTHER" id="PTHR34266:SF2">
    <property type="entry name" value="THIAZOLE SYNTHASE"/>
    <property type="match status" value="1"/>
</dbReference>
<dbReference type="Pfam" id="PF05690">
    <property type="entry name" value="ThiG"/>
    <property type="match status" value="1"/>
</dbReference>
<dbReference type="SUPFAM" id="SSF110399">
    <property type="entry name" value="ThiG-like"/>
    <property type="match status" value="1"/>
</dbReference>
<comment type="function">
    <text evidence="1">Catalyzes the rearrangement of 1-deoxy-D-xylulose 5-phosphate (DXP) to produce the thiazole phosphate moiety of thiamine. Sulfur is provided by the thiocarboxylate moiety of the carrier protein ThiS. In vitro, sulfur can be provided by H(2)S.</text>
</comment>
<comment type="catalytic activity">
    <reaction evidence="1">
        <text>[ThiS sulfur-carrier protein]-C-terminal-Gly-aminoethanethioate + 2-iminoacetate + 1-deoxy-D-xylulose 5-phosphate = [ThiS sulfur-carrier protein]-C-terminal Gly-Gly + 2-[(2R,5Z)-2-carboxy-4-methylthiazol-5(2H)-ylidene]ethyl phosphate + 2 H2O + H(+)</text>
        <dbReference type="Rhea" id="RHEA:26297"/>
        <dbReference type="Rhea" id="RHEA-COMP:12909"/>
        <dbReference type="Rhea" id="RHEA-COMP:19908"/>
        <dbReference type="ChEBI" id="CHEBI:15377"/>
        <dbReference type="ChEBI" id="CHEBI:15378"/>
        <dbReference type="ChEBI" id="CHEBI:57792"/>
        <dbReference type="ChEBI" id="CHEBI:62899"/>
        <dbReference type="ChEBI" id="CHEBI:77846"/>
        <dbReference type="ChEBI" id="CHEBI:90778"/>
        <dbReference type="ChEBI" id="CHEBI:232372"/>
        <dbReference type="EC" id="2.8.1.10"/>
    </reaction>
</comment>
<comment type="pathway">
    <text evidence="1">Cofactor biosynthesis; thiamine diphosphate biosynthesis.</text>
</comment>
<comment type="subunit">
    <text evidence="1">Homotetramer. Forms heterodimers with either ThiH or ThiS.</text>
</comment>
<comment type="subcellular location">
    <subcellularLocation>
        <location evidence="1">Cytoplasm</location>
    </subcellularLocation>
</comment>
<comment type="similarity">
    <text evidence="1">Belongs to the ThiG family.</text>
</comment>
<name>THIG_SYNSC</name>
<gene>
    <name evidence="1" type="primary">thiG</name>
    <name type="ordered locus">Syncc9605_0054</name>
</gene>
<organism>
    <name type="scientific">Synechococcus sp. (strain CC9605)</name>
    <dbReference type="NCBI Taxonomy" id="110662"/>
    <lineage>
        <taxon>Bacteria</taxon>
        <taxon>Bacillati</taxon>
        <taxon>Cyanobacteriota</taxon>
        <taxon>Cyanophyceae</taxon>
        <taxon>Synechococcales</taxon>
        <taxon>Synechococcaceae</taxon>
        <taxon>Synechococcus</taxon>
    </lineage>
</organism>
<protein>
    <recommendedName>
        <fullName evidence="1">Thiazole synthase</fullName>
        <ecNumber evidence="1">2.8.1.10</ecNumber>
    </recommendedName>
</protein>
<accession>Q3ANJ9</accession>
<keyword id="KW-0963">Cytoplasm</keyword>
<keyword id="KW-0704">Schiff base</keyword>
<keyword id="KW-0784">Thiamine biosynthesis</keyword>
<keyword id="KW-0808">Transferase</keyword>
<sequence length="272" mass="28319">MDSPSPNSDPLTIGGRQFNSRLFTGTGKYPSMTSMQQSIERSGCDMVTVAVRRVQTVAAGHEGLMEAIDWQRIWMLPNTAGCTNAEEAVRVARLGRELAKLAGQEDNTFVKLEVIPDARHLLPDPIGTLNAAEQLVKEGFTVLPYINADPLLAKRLEEVGCATVMPLGSPIGSGQGLNNAANIGLIIENAGVPVVVDAGIGVPSEAAQALEMGADAVLVNSAIALAGDPAAMASAMSQAVMAGRTAHLSGRLPRRDQASASSPTTGLVQSPQ</sequence>